<reference key="1">
    <citation type="submission" date="2009-01" db="EMBL/GenBank/DDBJ databases">
        <title>Complete sequence of chromosome of Methylobacterium nodulans ORS 2060.</title>
        <authorList>
            <consortium name="US DOE Joint Genome Institute"/>
            <person name="Lucas S."/>
            <person name="Copeland A."/>
            <person name="Lapidus A."/>
            <person name="Glavina del Rio T."/>
            <person name="Dalin E."/>
            <person name="Tice H."/>
            <person name="Bruce D."/>
            <person name="Goodwin L."/>
            <person name="Pitluck S."/>
            <person name="Sims D."/>
            <person name="Brettin T."/>
            <person name="Detter J.C."/>
            <person name="Han C."/>
            <person name="Larimer F."/>
            <person name="Land M."/>
            <person name="Hauser L."/>
            <person name="Kyrpides N."/>
            <person name="Ivanova N."/>
            <person name="Marx C.J."/>
            <person name="Richardson P."/>
        </authorList>
    </citation>
    <scope>NUCLEOTIDE SEQUENCE [LARGE SCALE GENOMIC DNA]</scope>
    <source>
        <strain>LMG 21967 / CNCM I-2342 / ORS 2060</strain>
    </source>
</reference>
<name>DNLJ_METNO</name>
<evidence type="ECO:0000255" key="1">
    <source>
        <dbReference type="HAMAP-Rule" id="MF_01588"/>
    </source>
</evidence>
<evidence type="ECO:0000256" key="2">
    <source>
        <dbReference type="SAM" id="MobiDB-lite"/>
    </source>
</evidence>
<sequence>MPAQTSRARPVEEMTAAQAREAHESLSAEIAEHDRRYHGEDAPIISDAEYDALRRRLEAIEERFPELAGTGAASVSVGAKASDKFAKVRHAVPMLSLGNAFAEEEITEFVERVRRFLGLPASEPLAFTAEPKIDGLSLSLRYEGGRLVTAATRGDGEVGEDVTANVRTIREIPHELAGDDVPEICEVRGEVYLSHADFAAINARQEEAGRPLFANPRNAAAGSLRQLDPGITASRPLRFFAYAAGEMSSWPAETQSGLIGAFRRFGLPVNPRTKRCTSVAEMLAHYRAIETERAELGYDIDGVVYKVDEFALQRRLGFVARAPRWALAHKFPAQRAVTVIEAIEINVGRTGSLNPLARLKPVTVGGVVVSNATLHNEDYIRGIDADGNTIRSGINIWDGFRLREDVDLRQGSDVRVGDTVVVLRAGDVIPKVADVVLERRPADAVPYAFPETCPACGSHAVRAYNPRTGKLDSVRRCTGGLICPAQGQERLRHFVSRNAFDIEGFGETYIATLFEAGLVRQPADLFRLDFEPLKAAIVARRQALSAERALAAGKTPEAKKAKPKANEEDKAIHNLLAAVEARRTIPLNRFIFALGIEQVGEATAKALAKHFPDMPALMEGVRAAAACRPGPDWIELASLPRVGPTTRERLLAAAEAGETDLLADGAVTRLTSAQKEALLAAYGDRDGLRNAVERALRQKPGDAYRHLADDSEIGAVTTASLIEFFSEAHNVEAVEALLREVRTERAGTPAAAAVFSGQTVVFTGSLERMTRSEAKATAERLGAKVSGSVSAKTDLVVAGPGAGSKLKDAEKHGVRVISEAEWLAMVEAA</sequence>
<protein>
    <recommendedName>
        <fullName evidence="1">DNA ligase</fullName>
        <ecNumber evidence="1">6.5.1.2</ecNumber>
    </recommendedName>
    <alternativeName>
        <fullName evidence="1">Polydeoxyribonucleotide synthase [NAD(+)]</fullName>
    </alternativeName>
</protein>
<dbReference type="EC" id="6.5.1.2" evidence="1"/>
<dbReference type="EMBL" id="CP001349">
    <property type="protein sequence ID" value="ACL55533.1"/>
    <property type="molecule type" value="Genomic_DNA"/>
</dbReference>
<dbReference type="RefSeq" id="WP_015927243.1">
    <property type="nucleotide sequence ID" value="NC_011894.1"/>
</dbReference>
<dbReference type="SMR" id="B8ICE5"/>
<dbReference type="STRING" id="460265.Mnod_0491"/>
<dbReference type="KEGG" id="mno:Mnod_0491"/>
<dbReference type="eggNOG" id="COG0272">
    <property type="taxonomic scope" value="Bacteria"/>
</dbReference>
<dbReference type="HOGENOM" id="CLU_007764_2_1_5"/>
<dbReference type="OrthoDB" id="9759736at2"/>
<dbReference type="Proteomes" id="UP000008207">
    <property type="component" value="Chromosome"/>
</dbReference>
<dbReference type="GO" id="GO:0005829">
    <property type="term" value="C:cytosol"/>
    <property type="evidence" value="ECO:0007669"/>
    <property type="project" value="TreeGrafter"/>
</dbReference>
<dbReference type="GO" id="GO:0003677">
    <property type="term" value="F:DNA binding"/>
    <property type="evidence" value="ECO:0007669"/>
    <property type="project" value="InterPro"/>
</dbReference>
<dbReference type="GO" id="GO:0003911">
    <property type="term" value="F:DNA ligase (NAD+) activity"/>
    <property type="evidence" value="ECO:0007669"/>
    <property type="project" value="UniProtKB-UniRule"/>
</dbReference>
<dbReference type="GO" id="GO:0046872">
    <property type="term" value="F:metal ion binding"/>
    <property type="evidence" value="ECO:0007669"/>
    <property type="project" value="UniProtKB-KW"/>
</dbReference>
<dbReference type="GO" id="GO:0006281">
    <property type="term" value="P:DNA repair"/>
    <property type="evidence" value="ECO:0007669"/>
    <property type="project" value="UniProtKB-KW"/>
</dbReference>
<dbReference type="GO" id="GO:0006260">
    <property type="term" value="P:DNA replication"/>
    <property type="evidence" value="ECO:0007669"/>
    <property type="project" value="UniProtKB-KW"/>
</dbReference>
<dbReference type="CDD" id="cd17748">
    <property type="entry name" value="BRCT_DNA_ligase_like"/>
    <property type="match status" value="1"/>
</dbReference>
<dbReference type="CDD" id="cd00114">
    <property type="entry name" value="LIGANc"/>
    <property type="match status" value="1"/>
</dbReference>
<dbReference type="FunFam" id="3.30.470.30:FF:000001">
    <property type="entry name" value="DNA ligase"/>
    <property type="match status" value="1"/>
</dbReference>
<dbReference type="Gene3D" id="6.20.10.30">
    <property type="match status" value="1"/>
</dbReference>
<dbReference type="Gene3D" id="1.10.150.20">
    <property type="entry name" value="5' to 3' exonuclease, C-terminal subdomain"/>
    <property type="match status" value="2"/>
</dbReference>
<dbReference type="Gene3D" id="3.40.50.10190">
    <property type="entry name" value="BRCT domain"/>
    <property type="match status" value="1"/>
</dbReference>
<dbReference type="Gene3D" id="3.30.470.30">
    <property type="entry name" value="DNA ligase/mRNA capping enzyme"/>
    <property type="match status" value="1"/>
</dbReference>
<dbReference type="Gene3D" id="1.10.287.610">
    <property type="entry name" value="Helix hairpin bin"/>
    <property type="match status" value="1"/>
</dbReference>
<dbReference type="Gene3D" id="2.40.50.140">
    <property type="entry name" value="Nucleic acid-binding proteins"/>
    <property type="match status" value="1"/>
</dbReference>
<dbReference type="HAMAP" id="MF_01588">
    <property type="entry name" value="DNA_ligase_A"/>
    <property type="match status" value="1"/>
</dbReference>
<dbReference type="InterPro" id="IPR001357">
    <property type="entry name" value="BRCT_dom"/>
</dbReference>
<dbReference type="InterPro" id="IPR036420">
    <property type="entry name" value="BRCT_dom_sf"/>
</dbReference>
<dbReference type="InterPro" id="IPR041663">
    <property type="entry name" value="DisA/LigA_HHH"/>
</dbReference>
<dbReference type="InterPro" id="IPR001679">
    <property type="entry name" value="DNA_ligase"/>
</dbReference>
<dbReference type="InterPro" id="IPR018239">
    <property type="entry name" value="DNA_ligase_AS"/>
</dbReference>
<dbReference type="InterPro" id="IPR033136">
    <property type="entry name" value="DNA_ligase_CS"/>
</dbReference>
<dbReference type="InterPro" id="IPR013839">
    <property type="entry name" value="DNAligase_adenylation"/>
</dbReference>
<dbReference type="InterPro" id="IPR013840">
    <property type="entry name" value="DNAligase_N"/>
</dbReference>
<dbReference type="InterPro" id="IPR003583">
    <property type="entry name" value="Hlx-hairpin-Hlx_DNA-bd_motif"/>
</dbReference>
<dbReference type="InterPro" id="IPR012340">
    <property type="entry name" value="NA-bd_OB-fold"/>
</dbReference>
<dbReference type="InterPro" id="IPR004150">
    <property type="entry name" value="NAD_DNA_ligase_OB"/>
</dbReference>
<dbReference type="InterPro" id="IPR010994">
    <property type="entry name" value="RuvA_2-like"/>
</dbReference>
<dbReference type="InterPro" id="IPR004149">
    <property type="entry name" value="Znf_DNAligase_C4"/>
</dbReference>
<dbReference type="NCBIfam" id="TIGR00575">
    <property type="entry name" value="dnlj"/>
    <property type="match status" value="1"/>
</dbReference>
<dbReference type="NCBIfam" id="NF005932">
    <property type="entry name" value="PRK07956.1"/>
    <property type="match status" value="1"/>
</dbReference>
<dbReference type="PANTHER" id="PTHR23389">
    <property type="entry name" value="CHROMOSOME TRANSMISSION FIDELITY FACTOR 18"/>
    <property type="match status" value="1"/>
</dbReference>
<dbReference type="PANTHER" id="PTHR23389:SF9">
    <property type="entry name" value="DNA LIGASE"/>
    <property type="match status" value="1"/>
</dbReference>
<dbReference type="Pfam" id="PF00533">
    <property type="entry name" value="BRCT"/>
    <property type="match status" value="1"/>
</dbReference>
<dbReference type="Pfam" id="PF01653">
    <property type="entry name" value="DNA_ligase_aden"/>
    <property type="match status" value="1"/>
</dbReference>
<dbReference type="Pfam" id="PF03120">
    <property type="entry name" value="DNA_ligase_OB"/>
    <property type="match status" value="1"/>
</dbReference>
<dbReference type="Pfam" id="PF03119">
    <property type="entry name" value="DNA_ligase_ZBD"/>
    <property type="match status" value="1"/>
</dbReference>
<dbReference type="Pfam" id="PF12826">
    <property type="entry name" value="HHH_2"/>
    <property type="match status" value="1"/>
</dbReference>
<dbReference type="PIRSF" id="PIRSF001604">
    <property type="entry name" value="LigA"/>
    <property type="match status" value="1"/>
</dbReference>
<dbReference type="SMART" id="SM00292">
    <property type="entry name" value="BRCT"/>
    <property type="match status" value="1"/>
</dbReference>
<dbReference type="SMART" id="SM00278">
    <property type="entry name" value="HhH1"/>
    <property type="match status" value="3"/>
</dbReference>
<dbReference type="SMART" id="SM00532">
    <property type="entry name" value="LIGANc"/>
    <property type="match status" value="1"/>
</dbReference>
<dbReference type="SUPFAM" id="SSF52113">
    <property type="entry name" value="BRCT domain"/>
    <property type="match status" value="1"/>
</dbReference>
<dbReference type="SUPFAM" id="SSF56091">
    <property type="entry name" value="DNA ligase/mRNA capping enzyme, catalytic domain"/>
    <property type="match status" value="1"/>
</dbReference>
<dbReference type="SUPFAM" id="SSF50249">
    <property type="entry name" value="Nucleic acid-binding proteins"/>
    <property type="match status" value="2"/>
</dbReference>
<dbReference type="SUPFAM" id="SSF47781">
    <property type="entry name" value="RuvA domain 2-like"/>
    <property type="match status" value="1"/>
</dbReference>
<dbReference type="PROSITE" id="PS50172">
    <property type="entry name" value="BRCT"/>
    <property type="match status" value="1"/>
</dbReference>
<dbReference type="PROSITE" id="PS01055">
    <property type="entry name" value="DNA_LIGASE_N1"/>
    <property type="match status" value="1"/>
</dbReference>
<dbReference type="PROSITE" id="PS01056">
    <property type="entry name" value="DNA_LIGASE_N2"/>
    <property type="match status" value="1"/>
</dbReference>
<comment type="function">
    <text evidence="1">DNA ligase that catalyzes the formation of phosphodiester linkages between 5'-phosphoryl and 3'-hydroxyl groups in double-stranded DNA using NAD as a coenzyme and as the energy source for the reaction. It is essential for DNA replication and repair of damaged DNA.</text>
</comment>
<comment type="catalytic activity">
    <reaction evidence="1">
        <text>NAD(+) + (deoxyribonucleotide)n-3'-hydroxyl + 5'-phospho-(deoxyribonucleotide)m = (deoxyribonucleotide)n+m + AMP + beta-nicotinamide D-nucleotide.</text>
        <dbReference type="EC" id="6.5.1.2"/>
    </reaction>
</comment>
<comment type="cofactor">
    <cofactor evidence="1">
        <name>Mg(2+)</name>
        <dbReference type="ChEBI" id="CHEBI:18420"/>
    </cofactor>
    <cofactor evidence="1">
        <name>Mn(2+)</name>
        <dbReference type="ChEBI" id="CHEBI:29035"/>
    </cofactor>
</comment>
<comment type="similarity">
    <text evidence="1">Belongs to the NAD-dependent DNA ligase family. LigA subfamily.</text>
</comment>
<organism>
    <name type="scientific">Methylobacterium nodulans (strain LMG 21967 / CNCM I-2342 / ORS 2060)</name>
    <dbReference type="NCBI Taxonomy" id="460265"/>
    <lineage>
        <taxon>Bacteria</taxon>
        <taxon>Pseudomonadati</taxon>
        <taxon>Pseudomonadota</taxon>
        <taxon>Alphaproteobacteria</taxon>
        <taxon>Hyphomicrobiales</taxon>
        <taxon>Methylobacteriaceae</taxon>
        <taxon>Methylobacterium</taxon>
    </lineage>
</organism>
<accession>B8ICE5</accession>
<feature type="chain" id="PRO_0000380417" description="DNA ligase">
    <location>
        <begin position="1"/>
        <end position="829"/>
    </location>
</feature>
<feature type="domain" description="BRCT" evidence="1">
    <location>
        <begin position="750"/>
        <end position="829"/>
    </location>
</feature>
<feature type="region of interest" description="Disordered" evidence="2">
    <location>
        <begin position="1"/>
        <end position="23"/>
    </location>
</feature>
<feature type="active site" description="N6-AMP-lysine intermediate" evidence="1">
    <location>
        <position position="132"/>
    </location>
</feature>
<feature type="binding site" evidence="1">
    <location>
        <begin position="47"/>
        <end position="51"/>
    </location>
    <ligand>
        <name>NAD(+)</name>
        <dbReference type="ChEBI" id="CHEBI:57540"/>
    </ligand>
</feature>
<feature type="binding site" evidence="1">
    <location>
        <begin position="96"/>
        <end position="97"/>
    </location>
    <ligand>
        <name>NAD(+)</name>
        <dbReference type="ChEBI" id="CHEBI:57540"/>
    </ligand>
</feature>
<feature type="binding site" evidence="1">
    <location>
        <position position="130"/>
    </location>
    <ligand>
        <name>NAD(+)</name>
        <dbReference type="ChEBI" id="CHEBI:57540"/>
    </ligand>
</feature>
<feature type="binding site" evidence="1">
    <location>
        <position position="153"/>
    </location>
    <ligand>
        <name>NAD(+)</name>
        <dbReference type="ChEBI" id="CHEBI:57540"/>
    </ligand>
</feature>
<feature type="binding site" evidence="1">
    <location>
        <position position="190"/>
    </location>
    <ligand>
        <name>NAD(+)</name>
        <dbReference type="ChEBI" id="CHEBI:57540"/>
    </ligand>
</feature>
<feature type="binding site" evidence="1">
    <location>
        <position position="306"/>
    </location>
    <ligand>
        <name>NAD(+)</name>
        <dbReference type="ChEBI" id="CHEBI:57540"/>
    </ligand>
</feature>
<feature type="binding site" evidence="1">
    <location>
        <position position="330"/>
    </location>
    <ligand>
        <name>NAD(+)</name>
        <dbReference type="ChEBI" id="CHEBI:57540"/>
    </ligand>
</feature>
<feature type="binding site" evidence="1">
    <location>
        <position position="453"/>
    </location>
    <ligand>
        <name>Zn(2+)</name>
        <dbReference type="ChEBI" id="CHEBI:29105"/>
    </ligand>
</feature>
<feature type="binding site" evidence="1">
    <location>
        <position position="456"/>
    </location>
    <ligand>
        <name>Zn(2+)</name>
        <dbReference type="ChEBI" id="CHEBI:29105"/>
    </ligand>
</feature>
<feature type="binding site" evidence="1">
    <location>
        <position position="477"/>
    </location>
    <ligand>
        <name>Zn(2+)</name>
        <dbReference type="ChEBI" id="CHEBI:29105"/>
    </ligand>
</feature>
<feature type="binding site" evidence="1">
    <location>
        <position position="483"/>
    </location>
    <ligand>
        <name>Zn(2+)</name>
        <dbReference type="ChEBI" id="CHEBI:29105"/>
    </ligand>
</feature>
<keyword id="KW-0227">DNA damage</keyword>
<keyword id="KW-0234">DNA repair</keyword>
<keyword id="KW-0235">DNA replication</keyword>
<keyword id="KW-0436">Ligase</keyword>
<keyword id="KW-0460">Magnesium</keyword>
<keyword id="KW-0464">Manganese</keyword>
<keyword id="KW-0479">Metal-binding</keyword>
<keyword id="KW-0520">NAD</keyword>
<keyword id="KW-1185">Reference proteome</keyword>
<keyword id="KW-0862">Zinc</keyword>
<proteinExistence type="inferred from homology"/>
<gene>
    <name evidence="1" type="primary">ligA</name>
    <name type="ordered locus">Mnod_0491</name>
</gene>